<dbReference type="EMBL" id="AB058646">
    <property type="protein sequence ID" value="BAB40229.1"/>
    <property type="molecule type" value="mRNA"/>
</dbReference>
<dbReference type="EMBL" id="AY061857">
    <property type="protein sequence ID" value="AAL35741.1"/>
    <property type="molecule type" value="mRNA"/>
</dbReference>
<dbReference type="EMBL" id="AY358120">
    <property type="protein sequence ID" value="AAQ88487.1"/>
    <property type="molecule type" value="mRNA"/>
</dbReference>
<dbReference type="EMBL" id="BC119648">
    <property type="protein sequence ID" value="AAI19649.1"/>
    <property type="molecule type" value="mRNA"/>
</dbReference>
<dbReference type="EMBL" id="BC119649">
    <property type="protein sequence ID" value="AAI19650.1"/>
    <property type="molecule type" value="mRNA"/>
</dbReference>
<dbReference type="CCDS" id="CCDS13711.1"/>
<dbReference type="RefSeq" id="NP_112153.1">
    <property type="nucleotide sequence ID" value="NM_030891.6"/>
</dbReference>
<dbReference type="SMR" id="Q9BY71"/>
<dbReference type="BioGRID" id="123511">
    <property type="interactions" value="17"/>
</dbReference>
<dbReference type="FunCoup" id="Q9BY71">
    <property type="interactions" value="665"/>
</dbReference>
<dbReference type="IntAct" id="Q9BY71">
    <property type="interactions" value="18"/>
</dbReference>
<dbReference type="STRING" id="9606.ENSP00000291592"/>
<dbReference type="GlyGen" id="Q9BY71">
    <property type="glycosylation" value="1 site, 1 O-linked glycan (1 site)"/>
</dbReference>
<dbReference type="iPTMnet" id="Q9BY71"/>
<dbReference type="PhosphoSitePlus" id="Q9BY71"/>
<dbReference type="BioMuta" id="LRRC3"/>
<dbReference type="DMDM" id="18202742"/>
<dbReference type="jPOST" id="Q9BY71"/>
<dbReference type="MassIVE" id="Q9BY71"/>
<dbReference type="PaxDb" id="9606-ENSP00000291592"/>
<dbReference type="PeptideAtlas" id="Q9BY71"/>
<dbReference type="ProteomicsDB" id="79596"/>
<dbReference type="Antibodypedia" id="2538">
    <property type="antibodies" value="35 antibodies from 15 providers"/>
</dbReference>
<dbReference type="DNASU" id="81543"/>
<dbReference type="Ensembl" id="ENST00000291592.6">
    <property type="protein sequence ID" value="ENSP00000291592.4"/>
    <property type="gene ID" value="ENSG00000160233.8"/>
</dbReference>
<dbReference type="GeneID" id="81543"/>
<dbReference type="KEGG" id="hsa:81543"/>
<dbReference type="MANE-Select" id="ENST00000291592.6">
    <property type="protein sequence ID" value="ENSP00000291592.4"/>
    <property type="RefSeq nucleotide sequence ID" value="NM_030891.6"/>
    <property type="RefSeq protein sequence ID" value="NP_112153.1"/>
</dbReference>
<dbReference type="UCSC" id="uc002zfa.4">
    <property type="organism name" value="human"/>
</dbReference>
<dbReference type="AGR" id="HGNC:14965"/>
<dbReference type="CTD" id="81543"/>
<dbReference type="DisGeNET" id="81543"/>
<dbReference type="GeneCards" id="LRRC3"/>
<dbReference type="HGNC" id="HGNC:14965">
    <property type="gene designation" value="LRRC3"/>
</dbReference>
<dbReference type="HPA" id="ENSG00000160233">
    <property type="expression patterns" value="Tissue enhanced (liver)"/>
</dbReference>
<dbReference type="MIM" id="617620">
    <property type="type" value="gene"/>
</dbReference>
<dbReference type="neXtProt" id="NX_Q9BY71"/>
<dbReference type="OpenTargets" id="ENSG00000160233"/>
<dbReference type="PharmGKB" id="PA30462"/>
<dbReference type="VEuPathDB" id="HostDB:ENSG00000160233"/>
<dbReference type="eggNOG" id="KOG4237">
    <property type="taxonomic scope" value="Eukaryota"/>
</dbReference>
<dbReference type="GeneTree" id="ENSGT00940000154360"/>
<dbReference type="HOGENOM" id="CLU_064640_0_0_1"/>
<dbReference type="InParanoid" id="Q9BY71"/>
<dbReference type="OMA" id="QCPDHAG"/>
<dbReference type="OrthoDB" id="6343311at2759"/>
<dbReference type="PAN-GO" id="Q9BY71">
    <property type="GO annotations" value="1 GO annotation based on evolutionary models"/>
</dbReference>
<dbReference type="PhylomeDB" id="Q9BY71"/>
<dbReference type="TreeFam" id="TF327070"/>
<dbReference type="PathwayCommons" id="Q9BY71"/>
<dbReference type="SignaLink" id="Q9BY71"/>
<dbReference type="BioGRID-ORCS" id="81543">
    <property type="hits" value="15 hits in 1139 CRISPR screens"/>
</dbReference>
<dbReference type="GenomeRNAi" id="81543"/>
<dbReference type="Pharos" id="Q9BY71">
    <property type="development level" value="Tdark"/>
</dbReference>
<dbReference type="PRO" id="PR:Q9BY71"/>
<dbReference type="Proteomes" id="UP000005640">
    <property type="component" value="Chromosome 21"/>
</dbReference>
<dbReference type="RNAct" id="Q9BY71">
    <property type="molecule type" value="protein"/>
</dbReference>
<dbReference type="Bgee" id="ENSG00000160233">
    <property type="expression patterns" value="Expressed in right lobe of liver and 120 other cell types or tissues"/>
</dbReference>
<dbReference type="GO" id="GO:0005886">
    <property type="term" value="C:plasma membrane"/>
    <property type="evidence" value="ECO:0000318"/>
    <property type="project" value="GO_Central"/>
</dbReference>
<dbReference type="FunFam" id="3.80.10.10:FF:000069">
    <property type="entry name" value="leucine-rich repeat-containing protein 3B"/>
    <property type="match status" value="1"/>
</dbReference>
<dbReference type="Gene3D" id="3.80.10.10">
    <property type="entry name" value="Ribonuclease Inhibitor"/>
    <property type="match status" value="1"/>
</dbReference>
<dbReference type="InterPro" id="IPR001611">
    <property type="entry name" value="Leu-rich_rpt"/>
</dbReference>
<dbReference type="InterPro" id="IPR003591">
    <property type="entry name" value="Leu-rich_rpt_typical-subtyp"/>
</dbReference>
<dbReference type="InterPro" id="IPR032675">
    <property type="entry name" value="LRR_dom_sf"/>
</dbReference>
<dbReference type="InterPro" id="IPR050541">
    <property type="entry name" value="LRR_TM_domain-containing"/>
</dbReference>
<dbReference type="InterPro" id="IPR000372">
    <property type="entry name" value="LRRNT"/>
</dbReference>
<dbReference type="PANTHER" id="PTHR24369">
    <property type="entry name" value="ANTIGEN BSP, PUTATIVE-RELATED"/>
    <property type="match status" value="1"/>
</dbReference>
<dbReference type="PANTHER" id="PTHR24369:SF170">
    <property type="entry name" value="LEUCINE-RICH REPEAT-CONTAINING PROTEIN 3"/>
    <property type="match status" value="1"/>
</dbReference>
<dbReference type="Pfam" id="PF00560">
    <property type="entry name" value="LRR_1"/>
    <property type="match status" value="1"/>
</dbReference>
<dbReference type="Pfam" id="PF13855">
    <property type="entry name" value="LRR_8"/>
    <property type="match status" value="1"/>
</dbReference>
<dbReference type="Pfam" id="PF01462">
    <property type="entry name" value="LRRNT"/>
    <property type="match status" value="1"/>
</dbReference>
<dbReference type="SMART" id="SM00369">
    <property type="entry name" value="LRR_TYP"/>
    <property type="match status" value="3"/>
</dbReference>
<dbReference type="SMART" id="SM00013">
    <property type="entry name" value="LRRNT"/>
    <property type="match status" value="1"/>
</dbReference>
<dbReference type="SUPFAM" id="SSF52058">
    <property type="entry name" value="L domain-like"/>
    <property type="match status" value="1"/>
</dbReference>
<dbReference type="PROSITE" id="PS51450">
    <property type="entry name" value="LRR"/>
    <property type="match status" value="3"/>
</dbReference>
<organism>
    <name type="scientific">Homo sapiens</name>
    <name type="common">Human</name>
    <dbReference type="NCBI Taxonomy" id="9606"/>
    <lineage>
        <taxon>Eukaryota</taxon>
        <taxon>Metazoa</taxon>
        <taxon>Chordata</taxon>
        <taxon>Craniata</taxon>
        <taxon>Vertebrata</taxon>
        <taxon>Euteleostomi</taxon>
        <taxon>Mammalia</taxon>
        <taxon>Eutheria</taxon>
        <taxon>Euarchontoglires</taxon>
        <taxon>Primates</taxon>
        <taxon>Haplorrhini</taxon>
        <taxon>Catarrhini</taxon>
        <taxon>Hominidae</taxon>
        <taxon>Homo</taxon>
    </lineage>
</organism>
<keyword id="KW-0433">Leucine-rich repeat</keyword>
<keyword id="KW-0472">Membrane</keyword>
<keyword id="KW-1267">Proteomics identification</keyword>
<keyword id="KW-1185">Reference proteome</keyword>
<keyword id="KW-0677">Repeat</keyword>
<keyword id="KW-0732">Signal</keyword>
<keyword id="KW-0812">Transmembrane</keyword>
<keyword id="KW-1133">Transmembrane helix</keyword>
<evidence type="ECO:0000255" key="1"/>
<evidence type="ECO:0000305" key="2"/>
<name>LRRC3_HUMAN</name>
<proteinExistence type="evidence at protein level"/>
<sequence length="257" mass="28108">MGTVRPPRPSLLLVSTRESCLFLLFCLHLGAACPQPCRCPDHAGAVAVFCSLRGLQEVPEDIPANTVLLKLDANKISHLPDGAFQHLHRLRELDLSHNAIEAIGSATFAGLAGGLRLLDLSYNRIQRIPKDALGKLSAKIRLSHNPLHCECALQEALWELKLDPDSVDEIACHTSVQEEFVGKPLVQALDAGASLCSVPHRTTDVAMLVTMFGWFAMVIAYVVYYVRHNQEDARRHLEYLKSLPSAPASKDPIGPGP</sequence>
<reference key="1">
    <citation type="submission" date="2001-03" db="EMBL/GenBank/DDBJ databases">
        <title>A novel leucine-rich repeat-containing gene LRRC3 on the human chromosome 21.</title>
        <authorList>
            <person name="Hahn Y."/>
            <person name="Park H.-S."/>
            <person name="Kim Y.S."/>
        </authorList>
    </citation>
    <scope>NUCLEOTIDE SEQUENCE [MRNA]</scope>
</reference>
<reference key="2">
    <citation type="journal article" date="2002" name="Genomics">
        <title>Nineteen additional unpredicted transcripts from human chromosome 21.</title>
        <authorList>
            <person name="Reymond A."/>
            <person name="Camargo A.A."/>
            <person name="Deutsch S."/>
            <person name="Stevenson B.J."/>
            <person name="Parmigiani R.B."/>
            <person name="Ucla C."/>
            <person name="Bettoni F."/>
            <person name="Rossier C."/>
            <person name="Lyle R."/>
            <person name="Guipponi M."/>
            <person name="de Souza S."/>
            <person name="Iseli C."/>
            <person name="Jongeneel C.V."/>
            <person name="Bucher P."/>
            <person name="Simpson A.J.G."/>
            <person name="Antonarakis S.E."/>
        </authorList>
    </citation>
    <scope>NUCLEOTIDE SEQUENCE [MRNA]</scope>
</reference>
<reference key="3">
    <citation type="journal article" date="2003" name="Genome Res.">
        <title>The secreted protein discovery initiative (SPDI), a large-scale effort to identify novel human secreted and transmembrane proteins: a bioinformatics assessment.</title>
        <authorList>
            <person name="Clark H.F."/>
            <person name="Gurney A.L."/>
            <person name="Abaya E."/>
            <person name="Baker K."/>
            <person name="Baldwin D.T."/>
            <person name="Brush J."/>
            <person name="Chen J."/>
            <person name="Chow B."/>
            <person name="Chui C."/>
            <person name="Crowley C."/>
            <person name="Currell B."/>
            <person name="Deuel B."/>
            <person name="Dowd P."/>
            <person name="Eaton D."/>
            <person name="Foster J.S."/>
            <person name="Grimaldi C."/>
            <person name="Gu Q."/>
            <person name="Hass P.E."/>
            <person name="Heldens S."/>
            <person name="Huang A."/>
            <person name="Kim H.S."/>
            <person name="Klimowski L."/>
            <person name="Jin Y."/>
            <person name="Johnson S."/>
            <person name="Lee J."/>
            <person name="Lewis L."/>
            <person name="Liao D."/>
            <person name="Mark M.R."/>
            <person name="Robbie E."/>
            <person name="Sanchez C."/>
            <person name="Schoenfeld J."/>
            <person name="Seshagiri S."/>
            <person name="Simmons L."/>
            <person name="Singh J."/>
            <person name="Smith V."/>
            <person name="Stinson J."/>
            <person name="Vagts A."/>
            <person name="Vandlen R.L."/>
            <person name="Watanabe C."/>
            <person name="Wieand D."/>
            <person name="Woods K."/>
            <person name="Xie M.-H."/>
            <person name="Yansura D.G."/>
            <person name="Yi S."/>
            <person name="Yu G."/>
            <person name="Yuan J."/>
            <person name="Zhang M."/>
            <person name="Zhang Z."/>
            <person name="Goddard A.D."/>
            <person name="Wood W.I."/>
            <person name="Godowski P.J."/>
            <person name="Gray A.M."/>
        </authorList>
    </citation>
    <scope>NUCLEOTIDE SEQUENCE [LARGE SCALE MRNA]</scope>
</reference>
<reference key="4">
    <citation type="journal article" date="2004" name="Genome Res.">
        <title>The status, quality, and expansion of the NIH full-length cDNA project: the Mammalian Gene Collection (MGC).</title>
        <authorList>
            <consortium name="The MGC Project Team"/>
        </authorList>
    </citation>
    <scope>NUCLEOTIDE SEQUENCE [LARGE SCALE MRNA]</scope>
</reference>
<gene>
    <name type="primary">LRRC3</name>
    <name type="synonym">C21orf102</name>
    <name type="synonym">LRRC3A</name>
    <name type="ORF">UNQ9233/PRO31982</name>
</gene>
<accession>Q9BY71</accession>
<accession>Q0VDJ2</accession>
<protein>
    <recommendedName>
        <fullName>Leucine-rich repeat-containing protein 3</fullName>
    </recommendedName>
</protein>
<feature type="signal peptide" evidence="1">
    <location>
        <begin position="1"/>
        <end position="32"/>
    </location>
</feature>
<feature type="chain" id="PRO_0000021618" description="Leucine-rich repeat-containing protein 3">
    <location>
        <begin position="33"/>
        <end position="257"/>
    </location>
</feature>
<feature type="transmembrane region" description="Helical" evidence="1">
    <location>
        <begin position="205"/>
        <end position="225"/>
    </location>
</feature>
<feature type="domain" description="LRRNT">
    <location>
        <begin position="33"/>
        <end position="64"/>
    </location>
</feature>
<feature type="repeat" description="LRR 1">
    <location>
        <begin position="65"/>
        <end position="86"/>
    </location>
</feature>
<feature type="repeat" description="LRR 2">
    <location>
        <begin position="89"/>
        <end position="110"/>
    </location>
</feature>
<feature type="repeat" description="LRR 3">
    <location>
        <begin position="114"/>
        <end position="135"/>
    </location>
</feature>
<feature type="repeat" description="LRR 4">
    <location>
        <begin position="136"/>
        <end position="157"/>
    </location>
</feature>
<comment type="interaction">
    <interactant intactId="EBI-1761329">
        <id>Q9BY71</id>
    </interactant>
    <interactant intactId="EBI-389883">
        <id>P16333</id>
        <label>NCK1</label>
    </interactant>
    <organismsDiffer>false</organismsDiffer>
    <experiments>2</experiments>
</comment>
<comment type="subcellular location">
    <subcellularLocation>
        <location evidence="2">Membrane</location>
        <topology evidence="2">Single-pass membrane protein</topology>
    </subcellularLocation>
</comment>
<comment type="tissue specificity">
    <text>Widely expressed; detected in testis, lung, small intestine, breast, brain, heart, bone marrow, placenta, colon, fetal brain, liver, fetal liver, thymus, salivary gland, spinal cord, spleen, trachea and adrenal gland.</text>
</comment>
<comment type="similarity">
    <text evidence="2">Belongs to the LRRC3 family.</text>
</comment>